<dbReference type="EC" id="6.5.1.2" evidence="1"/>
<dbReference type="EMBL" id="AE017220">
    <property type="protein sequence ID" value="AAX66331.1"/>
    <property type="molecule type" value="Genomic_DNA"/>
</dbReference>
<dbReference type="RefSeq" id="WP_001540561.1">
    <property type="nucleotide sequence ID" value="NC_006905.1"/>
</dbReference>
<dbReference type="SMR" id="Q57LT1"/>
<dbReference type="KEGG" id="sec:SCH_2425"/>
<dbReference type="HOGENOM" id="CLU_007764_2_1_6"/>
<dbReference type="Proteomes" id="UP000000538">
    <property type="component" value="Chromosome"/>
</dbReference>
<dbReference type="GO" id="GO:0005829">
    <property type="term" value="C:cytosol"/>
    <property type="evidence" value="ECO:0007669"/>
    <property type="project" value="TreeGrafter"/>
</dbReference>
<dbReference type="GO" id="GO:0003677">
    <property type="term" value="F:DNA binding"/>
    <property type="evidence" value="ECO:0007669"/>
    <property type="project" value="InterPro"/>
</dbReference>
<dbReference type="GO" id="GO:0003911">
    <property type="term" value="F:DNA ligase (NAD+) activity"/>
    <property type="evidence" value="ECO:0007669"/>
    <property type="project" value="UniProtKB-UniRule"/>
</dbReference>
<dbReference type="GO" id="GO:0046872">
    <property type="term" value="F:metal ion binding"/>
    <property type="evidence" value="ECO:0007669"/>
    <property type="project" value="UniProtKB-KW"/>
</dbReference>
<dbReference type="GO" id="GO:0006281">
    <property type="term" value="P:DNA repair"/>
    <property type="evidence" value="ECO:0007669"/>
    <property type="project" value="UniProtKB-KW"/>
</dbReference>
<dbReference type="GO" id="GO:0006260">
    <property type="term" value="P:DNA replication"/>
    <property type="evidence" value="ECO:0007669"/>
    <property type="project" value="UniProtKB-KW"/>
</dbReference>
<dbReference type="CDD" id="cd17748">
    <property type="entry name" value="BRCT_DNA_ligase_like"/>
    <property type="match status" value="1"/>
</dbReference>
<dbReference type="CDD" id="cd00114">
    <property type="entry name" value="LIGANc"/>
    <property type="match status" value="1"/>
</dbReference>
<dbReference type="FunFam" id="1.10.150.20:FF:000006">
    <property type="entry name" value="DNA ligase"/>
    <property type="match status" value="1"/>
</dbReference>
<dbReference type="FunFam" id="1.10.150.20:FF:000007">
    <property type="entry name" value="DNA ligase"/>
    <property type="match status" value="1"/>
</dbReference>
<dbReference type="FunFam" id="1.10.287.610:FF:000002">
    <property type="entry name" value="DNA ligase"/>
    <property type="match status" value="1"/>
</dbReference>
<dbReference type="FunFam" id="2.40.50.140:FF:000012">
    <property type="entry name" value="DNA ligase"/>
    <property type="match status" value="1"/>
</dbReference>
<dbReference type="FunFam" id="3.30.470.30:FF:000001">
    <property type="entry name" value="DNA ligase"/>
    <property type="match status" value="1"/>
</dbReference>
<dbReference type="FunFam" id="3.40.50.10190:FF:000004">
    <property type="entry name" value="DNA ligase"/>
    <property type="match status" value="1"/>
</dbReference>
<dbReference type="FunFam" id="6.20.10.30:FF:000001">
    <property type="entry name" value="DNA ligase"/>
    <property type="match status" value="1"/>
</dbReference>
<dbReference type="Gene3D" id="6.20.10.30">
    <property type="match status" value="1"/>
</dbReference>
<dbReference type="Gene3D" id="1.10.150.20">
    <property type="entry name" value="5' to 3' exonuclease, C-terminal subdomain"/>
    <property type="match status" value="2"/>
</dbReference>
<dbReference type="Gene3D" id="3.40.50.10190">
    <property type="entry name" value="BRCT domain"/>
    <property type="match status" value="1"/>
</dbReference>
<dbReference type="Gene3D" id="3.30.470.30">
    <property type="entry name" value="DNA ligase/mRNA capping enzyme"/>
    <property type="match status" value="1"/>
</dbReference>
<dbReference type="Gene3D" id="1.10.287.610">
    <property type="entry name" value="Helix hairpin bin"/>
    <property type="match status" value="1"/>
</dbReference>
<dbReference type="Gene3D" id="2.40.50.140">
    <property type="entry name" value="Nucleic acid-binding proteins"/>
    <property type="match status" value="1"/>
</dbReference>
<dbReference type="HAMAP" id="MF_01588">
    <property type="entry name" value="DNA_ligase_A"/>
    <property type="match status" value="1"/>
</dbReference>
<dbReference type="InterPro" id="IPR001357">
    <property type="entry name" value="BRCT_dom"/>
</dbReference>
<dbReference type="InterPro" id="IPR036420">
    <property type="entry name" value="BRCT_dom_sf"/>
</dbReference>
<dbReference type="InterPro" id="IPR041663">
    <property type="entry name" value="DisA/LigA_HHH"/>
</dbReference>
<dbReference type="InterPro" id="IPR001679">
    <property type="entry name" value="DNA_ligase"/>
</dbReference>
<dbReference type="InterPro" id="IPR018239">
    <property type="entry name" value="DNA_ligase_AS"/>
</dbReference>
<dbReference type="InterPro" id="IPR033136">
    <property type="entry name" value="DNA_ligase_CS"/>
</dbReference>
<dbReference type="InterPro" id="IPR013839">
    <property type="entry name" value="DNAligase_adenylation"/>
</dbReference>
<dbReference type="InterPro" id="IPR013840">
    <property type="entry name" value="DNAligase_N"/>
</dbReference>
<dbReference type="InterPro" id="IPR003583">
    <property type="entry name" value="Hlx-hairpin-Hlx_DNA-bd_motif"/>
</dbReference>
<dbReference type="InterPro" id="IPR012340">
    <property type="entry name" value="NA-bd_OB-fold"/>
</dbReference>
<dbReference type="InterPro" id="IPR004150">
    <property type="entry name" value="NAD_DNA_ligase_OB"/>
</dbReference>
<dbReference type="InterPro" id="IPR010994">
    <property type="entry name" value="RuvA_2-like"/>
</dbReference>
<dbReference type="InterPro" id="IPR004149">
    <property type="entry name" value="Znf_DNAligase_C4"/>
</dbReference>
<dbReference type="NCBIfam" id="TIGR00575">
    <property type="entry name" value="dnlj"/>
    <property type="match status" value="1"/>
</dbReference>
<dbReference type="NCBIfam" id="NF005932">
    <property type="entry name" value="PRK07956.1"/>
    <property type="match status" value="1"/>
</dbReference>
<dbReference type="PANTHER" id="PTHR23389">
    <property type="entry name" value="CHROMOSOME TRANSMISSION FIDELITY FACTOR 18"/>
    <property type="match status" value="1"/>
</dbReference>
<dbReference type="PANTHER" id="PTHR23389:SF9">
    <property type="entry name" value="DNA LIGASE"/>
    <property type="match status" value="1"/>
</dbReference>
<dbReference type="Pfam" id="PF00533">
    <property type="entry name" value="BRCT"/>
    <property type="match status" value="1"/>
</dbReference>
<dbReference type="Pfam" id="PF01653">
    <property type="entry name" value="DNA_ligase_aden"/>
    <property type="match status" value="1"/>
</dbReference>
<dbReference type="Pfam" id="PF03120">
    <property type="entry name" value="DNA_ligase_OB"/>
    <property type="match status" value="1"/>
</dbReference>
<dbReference type="Pfam" id="PF03119">
    <property type="entry name" value="DNA_ligase_ZBD"/>
    <property type="match status" value="1"/>
</dbReference>
<dbReference type="Pfam" id="PF12826">
    <property type="entry name" value="HHH_2"/>
    <property type="match status" value="1"/>
</dbReference>
<dbReference type="Pfam" id="PF14520">
    <property type="entry name" value="HHH_5"/>
    <property type="match status" value="1"/>
</dbReference>
<dbReference type="Pfam" id="PF22745">
    <property type="entry name" value="Nlig-Ia"/>
    <property type="match status" value="1"/>
</dbReference>
<dbReference type="PIRSF" id="PIRSF001604">
    <property type="entry name" value="LigA"/>
    <property type="match status" value="1"/>
</dbReference>
<dbReference type="SMART" id="SM00292">
    <property type="entry name" value="BRCT"/>
    <property type="match status" value="1"/>
</dbReference>
<dbReference type="SMART" id="SM00278">
    <property type="entry name" value="HhH1"/>
    <property type="match status" value="4"/>
</dbReference>
<dbReference type="SMART" id="SM00532">
    <property type="entry name" value="LIGANc"/>
    <property type="match status" value="1"/>
</dbReference>
<dbReference type="SUPFAM" id="SSF52113">
    <property type="entry name" value="BRCT domain"/>
    <property type="match status" value="1"/>
</dbReference>
<dbReference type="SUPFAM" id="SSF56091">
    <property type="entry name" value="DNA ligase/mRNA capping enzyme, catalytic domain"/>
    <property type="match status" value="1"/>
</dbReference>
<dbReference type="SUPFAM" id="SSF50249">
    <property type="entry name" value="Nucleic acid-binding proteins"/>
    <property type="match status" value="1"/>
</dbReference>
<dbReference type="SUPFAM" id="SSF47781">
    <property type="entry name" value="RuvA domain 2-like"/>
    <property type="match status" value="1"/>
</dbReference>
<dbReference type="PROSITE" id="PS50172">
    <property type="entry name" value="BRCT"/>
    <property type="match status" value="1"/>
</dbReference>
<dbReference type="PROSITE" id="PS01055">
    <property type="entry name" value="DNA_LIGASE_N1"/>
    <property type="match status" value="1"/>
</dbReference>
<dbReference type="PROSITE" id="PS01056">
    <property type="entry name" value="DNA_LIGASE_N2"/>
    <property type="match status" value="1"/>
</dbReference>
<keyword id="KW-0227">DNA damage</keyword>
<keyword id="KW-0234">DNA repair</keyword>
<keyword id="KW-0235">DNA replication</keyword>
<keyword id="KW-0436">Ligase</keyword>
<keyword id="KW-0460">Magnesium</keyword>
<keyword id="KW-0464">Manganese</keyword>
<keyword id="KW-0479">Metal-binding</keyword>
<keyword id="KW-0520">NAD</keyword>
<keyword id="KW-0862">Zinc</keyword>
<comment type="function">
    <text evidence="1">DNA ligase that catalyzes the formation of phosphodiester linkages between 5'-phosphoryl and 3'-hydroxyl groups in double-stranded DNA using NAD as a coenzyme and as the energy source for the reaction. It is essential for DNA replication and repair of damaged DNA.</text>
</comment>
<comment type="catalytic activity">
    <reaction evidence="1">
        <text>NAD(+) + (deoxyribonucleotide)n-3'-hydroxyl + 5'-phospho-(deoxyribonucleotide)m = (deoxyribonucleotide)n+m + AMP + beta-nicotinamide D-nucleotide.</text>
        <dbReference type="EC" id="6.5.1.2"/>
    </reaction>
</comment>
<comment type="cofactor">
    <cofactor evidence="1">
        <name>Mg(2+)</name>
        <dbReference type="ChEBI" id="CHEBI:18420"/>
    </cofactor>
    <cofactor evidence="1">
        <name>Mn(2+)</name>
        <dbReference type="ChEBI" id="CHEBI:29035"/>
    </cofactor>
</comment>
<comment type="similarity">
    <text evidence="1">Belongs to the NAD-dependent DNA ligase family. LigA subfamily.</text>
</comment>
<accession>Q57LT1</accession>
<feature type="chain" id="PRO_0000313418" description="DNA ligase">
    <location>
        <begin position="1"/>
        <end position="671"/>
    </location>
</feature>
<feature type="domain" description="BRCT" evidence="1">
    <location>
        <begin position="593"/>
        <end position="671"/>
    </location>
</feature>
<feature type="active site" description="N6-AMP-lysine intermediate" evidence="1">
    <location>
        <position position="115"/>
    </location>
</feature>
<feature type="binding site" evidence="1">
    <location>
        <begin position="32"/>
        <end position="36"/>
    </location>
    <ligand>
        <name>NAD(+)</name>
        <dbReference type="ChEBI" id="CHEBI:57540"/>
    </ligand>
</feature>
<feature type="binding site" evidence="1">
    <location>
        <begin position="81"/>
        <end position="82"/>
    </location>
    <ligand>
        <name>NAD(+)</name>
        <dbReference type="ChEBI" id="CHEBI:57540"/>
    </ligand>
</feature>
<feature type="binding site" evidence="1">
    <location>
        <position position="113"/>
    </location>
    <ligand>
        <name>NAD(+)</name>
        <dbReference type="ChEBI" id="CHEBI:57540"/>
    </ligand>
</feature>
<feature type="binding site" evidence="1">
    <location>
        <position position="136"/>
    </location>
    <ligand>
        <name>NAD(+)</name>
        <dbReference type="ChEBI" id="CHEBI:57540"/>
    </ligand>
</feature>
<feature type="binding site" evidence="1">
    <location>
        <position position="173"/>
    </location>
    <ligand>
        <name>NAD(+)</name>
        <dbReference type="ChEBI" id="CHEBI:57540"/>
    </ligand>
</feature>
<feature type="binding site" evidence="1">
    <location>
        <position position="290"/>
    </location>
    <ligand>
        <name>NAD(+)</name>
        <dbReference type="ChEBI" id="CHEBI:57540"/>
    </ligand>
</feature>
<feature type="binding site" evidence="1">
    <location>
        <position position="314"/>
    </location>
    <ligand>
        <name>NAD(+)</name>
        <dbReference type="ChEBI" id="CHEBI:57540"/>
    </ligand>
</feature>
<feature type="binding site" evidence="1">
    <location>
        <position position="408"/>
    </location>
    <ligand>
        <name>Zn(2+)</name>
        <dbReference type="ChEBI" id="CHEBI:29105"/>
    </ligand>
</feature>
<feature type="binding site" evidence="1">
    <location>
        <position position="411"/>
    </location>
    <ligand>
        <name>Zn(2+)</name>
        <dbReference type="ChEBI" id="CHEBI:29105"/>
    </ligand>
</feature>
<feature type="binding site" evidence="1">
    <location>
        <position position="426"/>
    </location>
    <ligand>
        <name>Zn(2+)</name>
        <dbReference type="ChEBI" id="CHEBI:29105"/>
    </ligand>
</feature>
<feature type="binding site" evidence="1">
    <location>
        <position position="432"/>
    </location>
    <ligand>
        <name>Zn(2+)</name>
        <dbReference type="ChEBI" id="CHEBI:29105"/>
    </ligand>
</feature>
<organism>
    <name type="scientific">Salmonella choleraesuis (strain SC-B67)</name>
    <dbReference type="NCBI Taxonomy" id="321314"/>
    <lineage>
        <taxon>Bacteria</taxon>
        <taxon>Pseudomonadati</taxon>
        <taxon>Pseudomonadota</taxon>
        <taxon>Gammaproteobacteria</taxon>
        <taxon>Enterobacterales</taxon>
        <taxon>Enterobacteriaceae</taxon>
        <taxon>Salmonella</taxon>
    </lineage>
</organism>
<gene>
    <name evidence="1" type="primary">ligA</name>
    <name type="ordered locus">SCH_2425</name>
</gene>
<proteinExistence type="inferred from homology"/>
<reference key="1">
    <citation type="journal article" date="2005" name="Nucleic Acids Res.">
        <title>The genome sequence of Salmonella enterica serovar Choleraesuis, a highly invasive and resistant zoonotic pathogen.</title>
        <authorList>
            <person name="Chiu C.-H."/>
            <person name="Tang P."/>
            <person name="Chu C."/>
            <person name="Hu S."/>
            <person name="Bao Q."/>
            <person name="Yu J."/>
            <person name="Chou Y.-Y."/>
            <person name="Wang H.-S."/>
            <person name="Lee Y.-S."/>
        </authorList>
    </citation>
    <scope>NUCLEOTIDE SEQUENCE [LARGE SCALE GENOMIC DNA]</scope>
    <source>
        <strain>SC-B67</strain>
    </source>
</reference>
<evidence type="ECO:0000255" key="1">
    <source>
        <dbReference type="HAMAP-Rule" id="MF_01588"/>
    </source>
</evidence>
<protein>
    <recommendedName>
        <fullName evidence="1">DNA ligase</fullName>
        <ecNumber evidence="1">6.5.1.2</ecNumber>
    </recommendedName>
    <alternativeName>
        <fullName evidence="1">Polydeoxyribonucleotide synthase [NAD(+)]</fullName>
    </alternativeName>
</protein>
<name>DNLJ_SALCH</name>
<sequence>MEPIEQQLTELRTTLRHHEYLYHVMDAPEIPDAEYDRLMRELRELEAQRPDLITPDSPTQRVGAAPLTAFNQIRHEVPMLSLDNVFDEESFLAFNKRVQDRLKSTENVIWCCELKLDGLAVSILYENGVLVSAATRGDGTTGEDITSNVRTIRAIPLKLHGDNIPARLEVRGEVFLPQAGFEKINEDARRTGGKVFANPRNAAAGSLRQLDPRITAKRPLTFFCYGVGILEGGELPDTHLGRLLQFKAWGLPVSDRVTLCDSPQAVLDFYRNVEKDRPTLGFDIDGVVIKVNSLALQEQLGFVARAPRWAVAFKFPAQEQMTFVRDVEFQVGRTGAITPVARLEPVQVAGVLVSNATLHNADEIERLGLRIGDKVVIRRAGDVIPQVVNVVLSERPEETRPIVFPTHCPVCGSDVERVEGEAVTRCTGGLICGAQRKESLKHFVSRRAMDVDGMGDKIIDQLVEREYVHTPADLFRLTAGKLTGLDRMGPKSAQNVVNALEKAKATTFARFLYALGIREVGEATAEGLAAYFGTLEALQAATIDELQKVPDVGIVVATHVFNFFAEESNRDVIVQLLAEGVHWPAPVVINVQEIDSPFAGKTVVLTGSLSQMSRDDAKARLVALGAKVAGSVSKKTDLVIAGEAAGSKLAKAQELGITVIDEAEMIRLLGA</sequence>